<comment type="function">
    <text>Has antibacterial activity against Gram-positive bacteria.</text>
</comment>
<comment type="subcellular location">
    <subcellularLocation>
        <location>Secreted</location>
    </subcellularLocation>
</comment>
<comment type="tissue specificity">
    <text>Expressed by the skin glands.</text>
</comment>
<comment type="similarity">
    <text evidence="1">Belongs to the frog skin active peptide (FSAP) family. Brevinin subfamily.</text>
</comment>
<name>RUGC_GLARU</name>
<accession>P80956</accession>
<sequence>GILDSFKQFAKGVGKDLIKGAAQGVLSTMSCKLAKTC</sequence>
<dbReference type="GO" id="GO:0005576">
    <property type="term" value="C:extracellular region"/>
    <property type="evidence" value="ECO:0007669"/>
    <property type="project" value="UniProtKB-SubCell"/>
</dbReference>
<dbReference type="GO" id="GO:0042742">
    <property type="term" value="P:defense response to bacterium"/>
    <property type="evidence" value="ECO:0007669"/>
    <property type="project" value="UniProtKB-KW"/>
</dbReference>
<dbReference type="InterPro" id="IPR012521">
    <property type="entry name" value="Antimicrobial_frog_2"/>
</dbReference>
<dbReference type="Pfam" id="PF08023">
    <property type="entry name" value="Antimicrobial_2"/>
    <property type="match status" value="1"/>
</dbReference>
<organism>
    <name type="scientific">Glandirana rugosa</name>
    <name type="common">Japanese wrinkled frog</name>
    <name type="synonym">Rana rugosa</name>
    <dbReference type="NCBI Taxonomy" id="8410"/>
    <lineage>
        <taxon>Eukaryota</taxon>
        <taxon>Metazoa</taxon>
        <taxon>Chordata</taxon>
        <taxon>Craniata</taxon>
        <taxon>Vertebrata</taxon>
        <taxon>Euteleostomi</taxon>
        <taxon>Amphibia</taxon>
        <taxon>Batrachia</taxon>
        <taxon>Anura</taxon>
        <taxon>Neobatrachia</taxon>
        <taxon>Ranoidea</taxon>
        <taxon>Ranidae</taxon>
        <taxon>Glandirana</taxon>
    </lineage>
</organism>
<feature type="peptide" id="PRO_0000044664" description="Rugosin-C">
    <location>
        <begin position="1"/>
        <end position="37"/>
    </location>
</feature>
<feature type="disulfide bond">
    <location>
        <begin position="31"/>
        <end position="37"/>
    </location>
</feature>
<reference key="1">
    <citation type="journal article" date="1995" name="Biochem. Biophys. Res. Commun.">
        <title>Isolation and characterization of novel antimicrobial peptides, rugosins A, B and C, from the skin of the frog, Rana rugosa.</title>
        <authorList>
            <person name="Suzuki S."/>
            <person name="Ohe Y."/>
            <person name="Kagegawa T."/>
            <person name="Tatemoto K."/>
        </authorList>
    </citation>
    <scope>PROTEIN SEQUENCE</scope>
    <source>
        <tissue>Skin secretion</tissue>
    </source>
</reference>
<proteinExistence type="evidence at protein level"/>
<evidence type="ECO:0000305" key="1"/>
<keyword id="KW-0878">Amphibian defense peptide</keyword>
<keyword id="KW-0044">Antibiotic</keyword>
<keyword id="KW-0929">Antimicrobial</keyword>
<keyword id="KW-0903">Direct protein sequencing</keyword>
<keyword id="KW-1015">Disulfide bond</keyword>
<keyword id="KW-0964">Secreted</keyword>
<protein>
    <recommendedName>
        <fullName>Rugosin-C</fullName>
    </recommendedName>
</protein>